<keyword id="KW-0378">Hydrolase</keyword>
<keyword id="KW-1185">Reference proteome</keyword>
<evidence type="ECO:0000255" key="1">
    <source>
        <dbReference type="HAMAP-Rule" id="MF_00298"/>
    </source>
</evidence>
<comment type="function">
    <text evidence="1">Accelerates the degradation of transcripts by removing pyrophosphate from the 5'-end of triphosphorylated RNA, leading to a more labile monophosphorylated state that can stimulate subsequent ribonuclease cleavage.</text>
</comment>
<comment type="cofactor">
    <cofactor evidence="1">
        <name>a divalent metal cation</name>
        <dbReference type="ChEBI" id="CHEBI:60240"/>
    </cofactor>
</comment>
<comment type="similarity">
    <text evidence="1">Belongs to the Nudix hydrolase family. RppH subfamily.</text>
</comment>
<accession>B1KI42</accession>
<protein>
    <recommendedName>
        <fullName evidence="1">RNA pyrophosphohydrolase</fullName>
        <ecNumber evidence="1">3.6.1.-</ecNumber>
    </recommendedName>
    <alternativeName>
        <fullName evidence="1">(Di)nucleoside polyphosphate hydrolase</fullName>
    </alternativeName>
</protein>
<gene>
    <name evidence="1" type="primary">rppH</name>
    <name evidence="1" type="synonym">nudH</name>
    <name type="ordered locus">Swoo_1227</name>
</gene>
<reference key="1">
    <citation type="submission" date="2008-02" db="EMBL/GenBank/DDBJ databases">
        <title>Complete sequence of Shewanella woodyi ATCC 51908.</title>
        <authorList>
            <consortium name="US DOE Joint Genome Institute"/>
            <person name="Copeland A."/>
            <person name="Lucas S."/>
            <person name="Lapidus A."/>
            <person name="Glavina del Rio T."/>
            <person name="Dalin E."/>
            <person name="Tice H."/>
            <person name="Bruce D."/>
            <person name="Goodwin L."/>
            <person name="Pitluck S."/>
            <person name="Sims D."/>
            <person name="Brettin T."/>
            <person name="Detter J.C."/>
            <person name="Han C."/>
            <person name="Kuske C.R."/>
            <person name="Schmutz J."/>
            <person name="Larimer F."/>
            <person name="Land M."/>
            <person name="Hauser L."/>
            <person name="Kyrpides N."/>
            <person name="Lykidis A."/>
            <person name="Zhao J.-S."/>
            <person name="Richardson P."/>
        </authorList>
    </citation>
    <scope>NUCLEOTIDE SEQUENCE [LARGE SCALE GENOMIC DNA]</scope>
    <source>
        <strain>ATCC 51908 / MS32</strain>
    </source>
</reference>
<name>RPPH_SHEWM</name>
<organism>
    <name type="scientific">Shewanella woodyi (strain ATCC 51908 / MS32)</name>
    <dbReference type="NCBI Taxonomy" id="392500"/>
    <lineage>
        <taxon>Bacteria</taxon>
        <taxon>Pseudomonadati</taxon>
        <taxon>Pseudomonadota</taxon>
        <taxon>Gammaproteobacteria</taxon>
        <taxon>Alteromonadales</taxon>
        <taxon>Shewanellaceae</taxon>
        <taxon>Shewanella</taxon>
    </lineage>
</organism>
<sequence length="173" mass="20690">MIDSDGFRANVGIIICNRFGQVMWARRFGQHSWQYPQGGVDDGETPEEAMYRELYEEVGLRPEHVQILTSTRSWLRYRLPKRLIRQDSKPVCIGQKQKWFLLQLKSSESAINLNACGHPEFDDWRWVSYWYPVRQVVSFKRDVYRKVMKEFAPTALPFQSREHHSNNRRGRRR</sequence>
<dbReference type="EC" id="3.6.1.-" evidence="1"/>
<dbReference type="EMBL" id="CP000961">
    <property type="protein sequence ID" value="ACA85520.1"/>
    <property type="molecule type" value="Genomic_DNA"/>
</dbReference>
<dbReference type="RefSeq" id="WP_012323866.1">
    <property type="nucleotide sequence ID" value="NC_010506.1"/>
</dbReference>
<dbReference type="SMR" id="B1KI42"/>
<dbReference type="STRING" id="392500.Swoo_1227"/>
<dbReference type="KEGG" id="swd:Swoo_1227"/>
<dbReference type="eggNOG" id="COG0494">
    <property type="taxonomic scope" value="Bacteria"/>
</dbReference>
<dbReference type="HOGENOM" id="CLU_087195_3_1_6"/>
<dbReference type="Proteomes" id="UP000002168">
    <property type="component" value="Chromosome"/>
</dbReference>
<dbReference type="GO" id="GO:0005737">
    <property type="term" value="C:cytoplasm"/>
    <property type="evidence" value="ECO:0007669"/>
    <property type="project" value="TreeGrafter"/>
</dbReference>
<dbReference type="GO" id="GO:0034353">
    <property type="term" value="F:mRNA 5'-diphosphatase activity"/>
    <property type="evidence" value="ECO:0007669"/>
    <property type="project" value="TreeGrafter"/>
</dbReference>
<dbReference type="GO" id="GO:0006402">
    <property type="term" value="P:mRNA catabolic process"/>
    <property type="evidence" value="ECO:0007669"/>
    <property type="project" value="TreeGrafter"/>
</dbReference>
<dbReference type="CDD" id="cd03671">
    <property type="entry name" value="NUDIX_Ap4A_hydrolase_plant_like"/>
    <property type="match status" value="1"/>
</dbReference>
<dbReference type="FunFam" id="3.90.79.10:FF:000001">
    <property type="entry name" value="RNA pyrophosphohydrolase"/>
    <property type="match status" value="1"/>
</dbReference>
<dbReference type="Gene3D" id="3.90.79.10">
    <property type="entry name" value="Nucleoside Triphosphate Pyrophosphohydrolase"/>
    <property type="match status" value="1"/>
</dbReference>
<dbReference type="HAMAP" id="MF_00298">
    <property type="entry name" value="Nudix_RppH"/>
    <property type="match status" value="1"/>
</dbReference>
<dbReference type="InterPro" id="IPR020476">
    <property type="entry name" value="Nudix_hydrolase"/>
</dbReference>
<dbReference type="InterPro" id="IPR015797">
    <property type="entry name" value="NUDIX_hydrolase-like_dom_sf"/>
</dbReference>
<dbReference type="InterPro" id="IPR020084">
    <property type="entry name" value="NUDIX_hydrolase_CS"/>
</dbReference>
<dbReference type="InterPro" id="IPR000086">
    <property type="entry name" value="NUDIX_hydrolase_dom"/>
</dbReference>
<dbReference type="InterPro" id="IPR022927">
    <property type="entry name" value="RppH"/>
</dbReference>
<dbReference type="NCBIfam" id="NF001934">
    <property type="entry name" value="PRK00714.1-1"/>
    <property type="match status" value="1"/>
</dbReference>
<dbReference type="NCBIfam" id="NF001937">
    <property type="entry name" value="PRK00714.1-4"/>
    <property type="match status" value="1"/>
</dbReference>
<dbReference type="NCBIfam" id="NF001938">
    <property type="entry name" value="PRK00714.1-5"/>
    <property type="match status" value="1"/>
</dbReference>
<dbReference type="PANTHER" id="PTHR23114">
    <property type="entry name" value="M7GPPPN-MRNA HYDROLASE"/>
    <property type="match status" value="1"/>
</dbReference>
<dbReference type="PANTHER" id="PTHR23114:SF17">
    <property type="entry name" value="M7GPPPN-MRNA HYDROLASE"/>
    <property type="match status" value="1"/>
</dbReference>
<dbReference type="Pfam" id="PF00293">
    <property type="entry name" value="NUDIX"/>
    <property type="match status" value="1"/>
</dbReference>
<dbReference type="PRINTS" id="PR00502">
    <property type="entry name" value="NUDIXFAMILY"/>
</dbReference>
<dbReference type="SUPFAM" id="SSF55811">
    <property type="entry name" value="Nudix"/>
    <property type="match status" value="1"/>
</dbReference>
<dbReference type="PROSITE" id="PS51462">
    <property type="entry name" value="NUDIX"/>
    <property type="match status" value="1"/>
</dbReference>
<dbReference type="PROSITE" id="PS00893">
    <property type="entry name" value="NUDIX_BOX"/>
    <property type="match status" value="1"/>
</dbReference>
<proteinExistence type="inferred from homology"/>
<feature type="chain" id="PRO_1000115299" description="RNA pyrophosphohydrolase">
    <location>
        <begin position="1"/>
        <end position="173"/>
    </location>
</feature>
<feature type="domain" description="Nudix hydrolase" evidence="1">
    <location>
        <begin position="6"/>
        <end position="149"/>
    </location>
</feature>
<feature type="short sequence motif" description="Nudix box">
    <location>
        <begin position="38"/>
        <end position="59"/>
    </location>
</feature>